<accession>A7Y3K5</accession>
<evidence type="ECO:0000255" key="1">
    <source>
        <dbReference type="HAMAP-Rule" id="MF_01358"/>
    </source>
</evidence>
<reference key="1">
    <citation type="journal article" date="2007" name="BMC Plant Biol.">
        <title>Complete plastid genome sequences suggest strong selection for retention of photosynthetic genes in the parasitic plant genus Cuscuta.</title>
        <authorList>
            <person name="McNeal J.R."/>
            <person name="Kuehl J.V."/>
            <person name="Boore J.L."/>
            <person name="dePamphilis C.W."/>
        </authorList>
    </citation>
    <scope>NUCLEOTIDE SEQUENCE [LARGE SCALE GENOMIC DNA]</scope>
</reference>
<geneLocation type="chloroplast"/>
<protein>
    <recommendedName>
        <fullName evidence="1">NAD(P)H-quinone oxidoreductase subunit H, chloroplastic</fullName>
        <ecNumber evidence="1">7.1.1.-</ecNumber>
    </recommendedName>
    <alternativeName>
        <fullName>NAD(P)H dehydrogenase subunit H</fullName>
    </alternativeName>
    <alternativeName>
        <fullName evidence="1">NADH-plastoquinone oxidoreductase 49 kDa subunit</fullName>
    </alternativeName>
    <alternativeName>
        <fullName evidence="1">NADH-plastoquinone oxidoreductase subunit H</fullName>
    </alternativeName>
</protein>
<organism>
    <name type="scientific">Ipomoea purpurea</name>
    <name type="common">Common morning glory</name>
    <name type="synonym">Pharbitis purpurea</name>
    <dbReference type="NCBI Taxonomy" id="4121"/>
    <lineage>
        <taxon>Eukaryota</taxon>
        <taxon>Viridiplantae</taxon>
        <taxon>Streptophyta</taxon>
        <taxon>Embryophyta</taxon>
        <taxon>Tracheophyta</taxon>
        <taxon>Spermatophyta</taxon>
        <taxon>Magnoliopsida</taxon>
        <taxon>eudicotyledons</taxon>
        <taxon>Gunneridae</taxon>
        <taxon>Pentapetalae</taxon>
        <taxon>asterids</taxon>
        <taxon>lamiids</taxon>
        <taxon>Solanales</taxon>
        <taxon>Convolvulaceae</taxon>
        <taxon>Ipomoeeae</taxon>
        <taxon>Ipomoea</taxon>
    </lineage>
</organism>
<comment type="function">
    <text evidence="1">NDH shuttles electrons from NAD(P)H:plastoquinone, via FMN and iron-sulfur (Fe-S) centers, to quinones in the photosynthetic chain and possibly in a chloroplast respiratory chain. The immediate electron acceptor for the enzyme in this species is believed to be plastoquinone. Couples the redox reaction to proton translocation, and thus conserves the redox energy in a proton gradient.</text>
</comment>
<comment type="catalytic activity">
    <reaction evidence="1">
        <text>a plastoquinone + NADH + (n+1) H(+)(in) = a plastoquinol + NAD(+) + n H(+)(out)</text>
        <dbReference type="Rhea" id="RHEA:42608"/>
        <dbReference type="Rhea" id="RHEA-COMP:9561"/>
        <dbReference type="Rhea" id="RHEA-COMP:9562"/>
        <dbReference type="ChEBI" id="CHEBI:15378"/>
        <dbReference type="ChEBI" id="CHEBI:17757"/>
        <dbReference type="ChEBI" id="CHEBI:57540"/>
        <dbReference type="ChEBI" id="CHEBI:57945"/>
        <dbReference type="ChEBI" id="CHEBI:62192"/>
    </reaction>
</comment>
<comment type="catalytic activity">
    <reaction evidence="1">
        <text>a plastoquinone + NADPH + (n+1) H(+)(in) = a plastoquinol + NADP(+) + n H(+)(out)</text>
        <dbReference type="Rhea" id="RHEA:42612"/>
        <dbReference type="Rhea" id="RHEA-COMP:9561"/>
        <dbReference type="Rhea" id="RHEA-COMP:9562"/>
        <dbReference type="ChEBI" id="CHEBI:15378"/>
        <dbReference type="ChEBI" id="CHEBI:17757"/>
        <dbReference type="ChEBI" id="CHEBI:57783"/>
        <dbReference type="ChEBI" id="CHEBI:58349"/>
        <dbReference type="ChEBI" id="CHEBI:62192"/>
    </reaction>
</comment>
<comment type="subunit">
    <text evidence="1">NDH is composed of at least 16 different subunits, 5 of which are encoded in the nucleus.</text>
</comment>
<comment type="subcellular location">
    <subcellularLocation>
        <location evidence="1">Plastid</location>
        <location evidence="1">Chloroplast thylakoid membrane</location>
        <topology evidence="1">Peripheral membrane protein</topology>
        <orientation evidence="1">Stromal side</orientation>
    </subcellularLocation>
</comment>
<comment type="similarity">
    <text evidence="1">Belongs to the complex I 49 kDa subunit family.</text>
</comment>
<sequence>MTAPATRKDLMIVNMGPHHPSMHGVLRLILTLDGEDVIDCEPILGYLHRGMEKIAENRTIIQYLPYVTRWDYLATMFTEAITVNGPERLSNIQVPKRASYIRVIMLELSRIASHLLWLGPFMADIGAQTPFFYIFRERELIYDLFEAATGMRMMHNFFRIGGVAADLPHGWIDKCLDFCNYFLTGVAEYQKLITQNPIFLERVEGIGTIRAEEALNWGLSGPMLRASGIEWDLRKIDQYECYDEFAWEVQWQKEGDSLARYLVRIGEMEESIKMIQQALEGIPGGPYENLEIRRFDRVKHPQWNDFEYRFIAKKTSPIFELSKQELYVRVEAPKGELGIFLIGDQSVFPWRWKIRPPGLINLQILPQVVKRMKLADIMTILGSIDIIMGEVDR</sequence>
<proteinExistence type="inferred from homology"/>
<keyword id="KW-0150">Chloroplast</keyword>
<keyword id="KW-0472">Membrane</keyword>
<keyword id="KW-0520">NAD</keyword>
<keyword id="KW-0521">NADP</keyword>
<keyword id="KW-0934">Plastid</keyword>
<keyword id="KW-0618">Plastoquinone</keyword>
<keyword id="KW-0874">Quinone</keyword>
<keyword id="KW-0793">Thylakoid</keyword>
<keyword id="KW-1278">Translocase</keyword>
<keyword id="KW-0813">Transport</keyword>
<dbReference type="EC" id="7.1.1.-" evidence="1"/>
<dbReference type="EMBL" id="EU118126">
    <property type="protein sequence ID" value="ABV02397.1"/>
    <property type="molecule type" value="Genomic_DNA"/>
</dbReference>
<dbReference type="EMBL" id="EU118126">
    <property type="protein sequence ID" value="ABV02407.1"/>
    <property type="molecule type" value="Genomic_DNA"/>
</dbReference>
<dbReference type="RefSeq" id="YP_001468357.1">
    <property type="nucleotide sequence ID" value="NC_009808.1"/>
</dbReference>
<dbReference type="RefSeq" id="YP_001468367.1">
    <property type="nucleotide sequence ID" value="NC_009808.1"/>
</dbReference>
<dbReference type="SMR" id="A7Y3K5"/>
<dbReference type="GeneID" id="5601297"/>
<dbReference type="GeneID" id="5601302"/>
<dbReference type="GO" id="GO:0009535">
    <property type="term" value="C:chloroplast thylakoid membrane"/>
    <property type="evidence" value="ECO:0007669"/>
    <property type="project" value="UniProtKB-SubCell"/>
</dbReference>
<dbReference type="GO" id="GO:0051287">
    <property type="term" value="F:NAD binding"/>
    <property type="evidence" value="ECO:0007669"/>
    <property type="project" value="InterPro"/>
</dbReference>
<dbReference type="GO" id="GO:0016655">
    <property type="term" value="F:oxidoreductase activity, acting on NAD(P)H, quinone or similar compound as acceptor"/>
    <property type="evidence" value="ECO:0007669"/>
    <property type="project" value="UniProtKB-UniRule"/>
</dbReference>
<dbReference type="GO" id="GO:0048038">
    <property type="term" value="F:quinone binding"/>
    <property type="evidence" value="ECO:0007669"/>
    <property type="project" value="UniProtKB-KW"/>
</dbReference>
<dbReference type="GO" id="GO:0019684">
    <property type="term" value="P:photosynthesis, light reaction"/>
    <property type="evidence" value="ECO:0007669"/>
    <property type="project" value="UniProtKB-UniRule"/>
</dbReference>
<dbReference type="Gene3D" id="1.10.645.10">
    <property type="entry name" value="Cytochrome-c3 Hydrogenase, chain B"/>
    <property type="match status" value="1"/>
</dbReference>
<dbReference type="HAMAP" id="MF_01358">
    <property type="entry name" value="NDH1_NuoD"/>
    <property type="match status" value="1"/>
</dbReference>
<dbReference type="InterPro" id="IPR001135">
    <property type="entry name" value="NADH_Q_OxRdtase_suD"/>
</dbReference>
<dbReference type="InterPro" id="IPR014029">
    <property type="entry name" value="NADH_UbQ_OxRdtase_49kDa_CS"/>
</dbReference>
<dbReference type="InterPro" id="IPR022885">
    <property type="entry name" value="NDH1_su_D/H"/>
</dbReference>
<dbReference type="InterPro" id="IPR029014">
    <property type="entry name" value="NiFe-Hase_large"/>
</dbReference>
<dbReference type="NCBIfam" id="NF004739">
    <property type="entry name" value="PRK06075.1"/>
    <property type="match status" value="1"/>
</dbReference>
<dbReference type="NCBIfam" id="NF005649">
    <property type="entry name" value="PRK07415.1"/>
    <property type="match status" value="1"/>
</dbReference>
<dbReference type="PANTHER" id="PTHR11993:SF10">
    <property type="entry name" value="NADH DEHYDROGENASE [UBIQUINONE] IRON-SULFUR PROTEIN 2, MITOCHONDRIAL"/>
    <property type="match status" value="1"/>
</dbReference>
<dbReference type="PANTHER" id="PTHR11993">
    <property type="entry name" value="NADH-UBIQUINONE OXIDOREDUCTASE 49 KDA SUBUNIT"/>
    <property type="match status" value="1"/>
</dbReference>
<dbReference type="Pfam" id="PF00346">
    <property type="entry name" value="Complex1_49kDa"/>
    <property type="match status" value="1"/>
</dbReference>
<dbReference type="SUPFAM" id="SSF56762">
    <property type="entry name" value="HydB/Nqo4-like"/>
    <property type="match status" value="1"/>
</dbReference>
<dbReference type="PROSITE" id="PS00535">
    <property type="entry name" value="COMPLEX1_49K"/>
    <property type="match status" value="1"/>
</dbReference>
<name>NDHH_IPOPU</name>
<feature type="chain" id="PRO_0000357996" description="NAD(P)H-quinone oxidoreductase subunit H, chloroplastic">
    <location>
        <begin position="1"/>
        <end position="393"/>
    </location>
</feature>
<gene>
    <name evidence="1" type="primary">ndhH</name>
</gene>